<comment type="function">
    <text evidence="1">Functions in nuclear protein import via a substrate-importin alpha-beta transport complex that passes though the nuclear pore complexes (NPC). Mediates docking of the substrate-importin complex to distinct nucleoporins (By similarity).</text>
</comment>
<comment type="subunit">
    <text evidence="1">Forms a complex with an importin alpha subunit.</text>
</comment>
<comment type="subcellular location">
    <subcellularLocation>
        <location evidence="1">Cytoplasm</location>
    </subcellularLocation>
    <subcellularLocation>
        <location evidence="1">Nucleus envelope</location>
    </subcellularLocation>
</comment>
<comment type="similarity">
    <text evidence="5">Belongs to the importin beta family. Importin beta-2 subfamily.</text>
</comment>
<feature type="chain" id="PRO_0000327493" description="Transportin">
    <location>
        <begin position="1"/>
        <end position="931"/>
    </location>
</feature>
<feature type="repeat" description="HEAT 1" evidence="2">
    <location>
        <begin position="10"/>
        <end position="37"/>
    </location>
</feature>
<feature type="domain" description="Importin N-terminal" evidence="3">
    <location>
        <begin position="32"/>
        <end position="99"/>
    </location>
</feature>
<feature type="repeat" description="HEAT 2" evidence="2">
    <location>
        <begin position="42"/>
        <end position="79"/>
    </location>
</feature>
<feature type="repeat" description="HEAT 3" evidence="2">
    <location>
        <begin position="88"/>
        <end position="121"/>
    </location>
</feature>
<feature type="repeat" description="HEAT 4" evidence="2">
    <location>
        <begin position="127"/>
        <end position="164"/>
    </location>
</feature>
<feature type="repeat" description="HEAT 5" evidence="2">
    <location>
        <begin position="171"/>
        <end position="201"/>
    </location>
</feature>
<feature type="repeat" description="HEAT 6" evidence="2">
    <location>
        <begin position="214"/>
        <end position="241"/>
    </location>
</feature>
<feature type="repeat" description="HEAT 7" evidence="2">
    <location>
        <begin position="253"/>
        <end position="280"/>
    </location>
</feature>
<feature type="repeat" description="HEAT 8" evidence="2">
    <location>
        <begin position="296"/>
        <end position="421"/>
    </location>
</feature>
<feature type="repeat" description="HEAT 9" evidence="2">
    <location>
        <begin position="430"/>
        <end position="459"/>
    </location>
</feature>
<feature type="repeat" description="HEAT 10" evidence="2">
    <location>
        <begin position="471"/>
        <end position="498"/>
    </location>
</feature>
<feature type="repeat" description="HEAT 11" evidence="2">
    <location>
        <begin position="512"/>
        <end position="545"/>
    </location>
</feature>
<feature type="repeat" description="HEAT 12" evidence="2">
    <location>
        <begin position="553"/>
        <end position="586"/>
    </location>
</feature>
<feature type="repeat" description="HEAT 13" evidence="2">
    <location>
        <begin position="594"/>
        <end position="632"/>
    </location>
</feature>
<feature type="repeat" description="HEAT 14" evidence="2">
    <location>
        <begin position="640"/>
        <end position="693"/>
    </location>
</feature>
<feature type="repeat" description="HEAT 15" evidence="2">
    <location>
        <begin position="704"/>
        <end position="735"/>
    </location>
</feature>
<feature type="repeat" description="HEAT 16" evidence="2">
    <location>
        <begin position="743"/>
        <end position="776"/>
    </location>
</feature>
<feature type="repeat" description="HEAT 17" evidence="2">
    <location>
        <begin position="784"/>
        <end position="819"/>
    </location>
</feature>
<feature type="repeat" description="HEAT 18" evidence="2">
    <location>
        <begin position="827"/>
        <end position="860"/>
    </location>
</feature>
<feature type="repeat" description="HEAT 19" evidence="2">
    <location>
        <begin position="869"/>
        <end position="900"/>
    </location>
</feature>
<feature type="region of interest" description="Disordered" evidence="4">
    <location>
        <begin position="317"/>
        <end position="401"/>
    </location>
</feature>
<feature type="compositionally biased region" description="Low complexity" evidence="4">
    <location>
        <begin position="358"/>
        <end position="381"/>
    </location>
</feature>
<feature type="compositionally biased region" description="Acidic residues" evidence="4">
    <location>
        <begin position="382"/>
        <end position="401"/>
    </location>
</feature>
<name>TNPO_DICDI</name>
<organism>
    <name type="scientific">Dictyostelium discoideum</name>
    <name type="common">Social amoeba</name>
    <dbReference type="NCBI Taxonomy" id="44689"/>
    <lineage>
        <taxon>Eukaryota</taxon>
        <taxon>Amoebozoa</taxon>
        <taxon>Evosea</taxon>
        <taxon>Eumycetozoa</taxon>
        <taxon>Dictyostelia</taxon>
        <taxon>Dictyosteliales</taxon>
        <taxon>Dictyosteliaceae</taxon>
        <taxon>Dictyostelium</taxon>
    </lineage>
</organism>
<dbReference type="EMBL" id="AAFI02000005">
    <property type="protein sequence ID" value="EAL72324.1"/>
    <property type="molecule type" value="Genomic_DNA"/>
</dbReference>
<dbReference type="RefSeq" id="XP_646424.1">
    <property type="nucleotide sequence ID" value="XM_641332.2"/>
</dbReference>
<dbReference type="SMR" id="Q55CQ7"/>
<dbReference type="FunCoup" id="Q55CQ7">
    <property type="interactions" value="1509"/>
</dbReference>
<dbReference type="STRING" id="44689.Q55CQ7"/>
<dbReference type="GlyGen" id="Q55CQ7">
    <property type="glycosylation" value="1 site"/>
</dbReference>
<dbReference type="PaxDb" id="44689-DDB0234262"/>
<dbReference type="EnsemblProtists" id="EAL72324">
    <property type="protein sequence ID" value="EAL72324"/>
    <property type="gene ID" value="DDB_G0269948"/>
</dbReference>
<dbReference type="GeneID" id="8617382"/>
<dbReference type="KEGG" id="ddi:DDB_G0269948"/>
<dbReference type="dictyBase" id="DDB_G0269948">
    <property type="gene designation" value="tnpo"/>
</dbReference>
<dbReference type="VEuPathDB" id="AmoebaDB:DDB_G0269948"/>
<dbReference type="eggNOG" id="KOG2023">
    <property type="taxonomic scope" value="Eukaryota"/>
</dbReference>
<dbReference type="HOGENOM" id="CLU_008136_1_0_1"/>
<dbReference type="InParanoid" id="Q55CQ7"/>
<dbReference type="OMA" id="AQEGAMS"/>
<dbReference type="PhylomeDB" id="Q55CQ7"/>
<dbReference type="Reactome" id="R-DDI-450513">
    <property type="pathway name" value="Tristetraprolin (TTP, ZFP36) binds and destabilizes mRNA"/>
</dbReference>
<dbReference type="PRO" id="PR:Q55CQ7"/>
<dbReference type="Proteomes" id="UP000002195">
    <property type="component" value="Chromosome 1"/>
</dbReference>
<dbReference type="GO" id="GO:0005737">
    <property type="term" value="C:cytoplasm"/>
    <property type="evidence" value="ECO:0000318"/>
    <property type="project" value="GO_Central"/>
</dbReference>
<dbReference type="GO" id="GO:0005829">
    <property type="term" value="C:cytosol"/>
    <property type="evidence" value="ECO:0000250"/>
    <property type="project" value="dictyBase"/>
</dbReference>
<dbReference type="GO" id="GO:0005635">
    <property type="term" value="C:nuclear envelope"/>
    <property type="evidence" value="ECO:0000250"/>
    <property type="project" value="dictyBase"/>
</dbReference>
<dbReference type="GO" id="GO:0005634">
    <property type="term" value="C:nucleus"/>
    <property type="evidence" value="ECO:0000318"/>
    <property type="project" value="GO_Central"/>
</dbReference>
<dbReference type="GO" id="GO:0061608">
    <property type="term" value="F:nuclear import signal receptor activity"/>
    <property type="evidence" value="ECO:0000318"/>
    <property type="project" value="GO_Central"/>
</dbReference>
<dbReference type="GO" id="GO:0008139">
    <property type="term" value="F:nuclear localization sequence binding"/>
    <property type="evidence" value="ECO:0000250"/>
    <property type="project" value="dictyBase"/>
</dbReference>
<dbReference type="GO" id="GO:0031267">
    <property type="term" value="F:small GTPase binding"/>
    <property type="evidence" value="ECO:0007669"/>
    <property type="project" value="InterPro"/>
</dbReference>
<dbReference type="GO" id="GO:0006606">
    <property type="term" value="P:protein import into nucleus"/>
    <property type="evidence" value="ECO:0000250"/>
    <property type="project" value="dictyBase"/>
</dbReference>
<dbReference type="FunFam" id="1.25.10.10:FF:001396">
    <property type="entry name" value="AER219Cp"/>
    <property type="match status" value="1"/>
</dbReference>
<dbReference type="FunFam" id="1.25.10.10:FF:000313">
    <property type="entry name" value="Importin beta-2 subunit, putative"/>
    <property type="match status" value="1"/>
</dbReference>
<dbReference type="Gene3D" id="1.25.10.10">
    <property type="entry name" value="Leucine-rich Repeat Variant"/>
    <property type="match status" value="2"/>
</dbReference>
<dbReference type="InterPro" id="IPR011989">
    <property type="entry name" value="ARM-like"/>
</dbReference>
<dbReference type="InterPro" id="IPR016024">
    <property type="entry name" value="ARM-type_fold"/>
</dbReference>
<dbReference type="InterPro" id="IPR001494">
    <property type="entry name" value="Importin-beta_N"/>
</dbReference>
<dbReference type="InterPro" id="IPR040122">
    <property type="entry name" value="Importin_beta"/>
</dbReference>
<dbReference type="PANTHER" id="PTHR10527">
    <property type="entry name" value="IMPORTIN BETA"/>
    <property type="match status" value="1"/>
</dbReference>
<dbReference type="Pfam" id="PF13513">
    <property type="entry name" value="HEAT_EZ"/>
    <property type="match status" value="1"/>
</dbReference>
<dbReference type="Pfam" id="PF03810">
    <property type="entry name" value="IBN_N"/>
    <property type="match status" value="1"/>
</dbReference>
<dbReference type="SMART" id="SM00913">
    <property type="entry name" value="IBN_N"/>
    <property type="match status" value="1"/>
</dbReference>
<dbReference type="SUPFAM" id="SSF48371">
    <property type="entry name" value="ARM repeat"/>
    <property type="match status" value="1"/>
</dbReference>
<dbReference type="PROSITE" id="PS50166">
    <property type="entry name" value="IMPORTIN_B_NT"/>
    <property type="match status" value="1"/>
</dbReference>
<keyword id="KW-0963">Cytoplasm</keyword>
<keyword id="KW-0539">Nucleus</keyword>
<keyword id="KW-0653">Protein transport</keyword>
<keyword id="KW-1185">Reference proteome</keyword>
<keyword id="KW-0677">Repeat</keyword>
<keyword id="KW-0813">Transport</keyword>
<proteinExistence type="inferred from homology"/>
<sequence length="931" mass="104796">MSEWVPNQDGLKQLVYVLNLSNSTSREVHDQIREELDKFHSVPDYNNYLTLIFKSNELQPHIRSVAGLVLKTNIKQYFEKMPREVQNYIKREILPVLSDPDASVRHTVGNIITNLIKKSCFSEWPELLPALNLALDSNSQDLIEGSLYTLSLLCEDSTKKLDSDDSGRALNQLIPKLIMFFKCNNADFRKKALVSISYFIISMPGALLINMEAFLKGIFSMSEDPSEAVRTNVCKTLVTLVETKIEFLLPYIKDVIQYMLHATKDKSEEVALEACEFWTAISQAEGCRDLLRDYLPVLVPILLNGMVYTEQDYEYLDQGDDSMTPDRPQDIKPFIASTKSHGSGSSGGGQDTGFVNPDNNNNSNNNNSSNNNSSNNNNNNNNEDDEEYNDDDDDDDDDGFEDEAWTIRKSSAFAIDVLSGIFPDAEYLSVTLPLIEQRMNEQNPWPVRESAILALGAIADGSKNGLAPHLSKVIPYLINTLNDPKPLVRSITCWTLSRYSYWIAQADGRDYLHPLVVNLLNRIVDNNKKVQEAACSAFATLEEEADLLLIPYLQMILVTFVNAFGKYQAKNLLILYDAISTLAKVVGNELNKPELINILVPPLLQKFNALDDSNKNLLPLLGCLNQVCSSIGAGLQNLISLFFNRSIKLIEGSLQAHYKYNNQDQKGSSSSSDQDFIVAALDLLQGLSEGIGTSIESLIPNSNLPHLLLQCMNLRGSDVLQSSFALLGDMSKFCLIHFKQYIPDYLNILTNNLYPEYLSVCNNASWAIGEIAIRMPDEVKPFVVAIRDRLISNINKVNLNRGVLENTAVTIGRLGIVSPADISPFVDKFIQCWCMAIRRKTDDIEKDSAFRGMWLIINNNPNGALRHLVYICDAVASWDKMQPDLYEAYFKLLHMYKTSMGGVWAQFYNQFPEQLREILNEKFKLNQDISQ</sequence>
<evidence type="ECO:0000250" key="1"/>
<evidence type="ECO:0000250" key="2">
    <source>
        <dbReference type="UniProtKB" id="Q92973"/>
    </source>
</evidence>
<evidence type="ECO:0000255" key="3">
    <source>
        <dbReference type="PROSITE-ProRule" id="PRU00115"/>
    </source>
</evidence>
<evidence type="ECO:0000256" key="4">
    <source>
        <dbReference type="SAM" id="MobiDB-lite"/>
    </source>
</evidence>
<evidence type="ECO:0000305" key="5"/>
<reference key="1">
    <citation type="journal article" date="2005" name="Nature">
        <title>The genome of the social amoeba Dictyostelium discoideum.</title>
        <authorList>
            <person name="Eichinger L."/>
            <person name="Pachebat J.A."/>
            <person name="Gloeckner G."/>
            <person name="Rajandream M.A."/>
            <person name="Sucgang R."/>
            <person name="Berriman M."/>
            <person name="Song J."/>
            <person name="Olsen R."/>
            <person name="Szafranski K."/>
            <person name="Xu Q."/>
            <person name="Tunggal B."/>
            <person name="Kummerfeld S."/>
            <person name="Madera M."/>
            <person name="Konfortov B.A."/>
            <person name="Rivero F."/>
            <person name="Bankier A.T."/>
            <person name="Lehmann R."/>
            <person name="Hamlin N."/>
            <person name="Davies R."/>
            <person name="Gaudet P."/>
            <person name="Fey P."/>
            <person name="Pilcher K."/>
            <person name="Chen G."/>
            <person name="Saunders D."/>
            <person name="Sodergren E.J."/>
            <person name="Davis P."/>
            <person name="Kerhornou A."/>
            <person name="Nie X."/>
            <person name="Hall N."/>
            <person name="Anjard C."/>
            <person name="Hemphill L."/>
            <person name="Bason N."/>
            <person name="Farbrother P."/>
            <person name="Desany B."/>
            <person name="Just E."/>
            <person name="Morio T."/>
            <person name="Rost R."/>
            <person name="Churcher C.M."/>
            <person name="Cooper J."/>
            <person name="Haydock S."/>
            <person name="van Driessche N."/>
            <person name="Cronin A."/>
            <person name="Goodhead I."/>
            <person name="Muzny D.M."/>
            <person name="Mourier T."/>
            <person name="Pain A."/>
            <person name="Lu M."/>
            <person name="Harper D."/>
            <person name="Lindsay R."/>
            <person name="Hauser H."/>
            <person name="James K.D."/>
            <person name="Quiles M."/>
            <person name="Madan Babu M."/>
            <person name="Saito T."/>
            <person name="Buchrieser C."/>
            <person name="Wardroper A."/>
            <person name="Felder M."/>
            <person name="Thangavelu M."/>
            <person name="Johnson D."/>
            <person name="Knights A."/>
            <person name="Loulseged H."/>
            <person name="Mungall K.L."/>
            <person name="Oliver K."/>
            <person name="Price C."/>
            <person name="Quail M.A."/>
            <person name="Urushihara H."/>
            <person name="Hernandez J."/>
            <person name="Rabbinowitsch E."/>
            <person name="Steffen D."/>
            <person name="Sanders M."/>
            <person name="Ma J."/>
            <person name="Kohara Y."/>
            <person name="Sharp S."/>
            <person name="Simmonds M.N."/>
            <person name="Spiegler S."/>
            <person name="Tivey A."/>
            <person name="Sugano S."/>
            <person name="White B."/>
            <person name="Walker D."/>
            <person name="Woodward J.R."/>
            <person name="Winckler T."/>
            <person name="Tanaka Y."/>
            <person name="Shaulsky G."/>
            <person name="Schleicher M."/>
            <person name="Weinstock G.M."/>
            <person name="Rosenthal A."/>
            <person name="Cox E.C."/>
            <person name="Chisholm R.L."/>
            <person name="Gibbs R.A."/>
            <person name="Loomis W.F."/>
            <person name="Platzer M."/>
            <person name="Kay R.R."/>
            <person name="Williams J.G."/>
            <person name="Dear P.H."/>
            <person name="Noegel A.A."/>
            <person name="Barrell B.G."/>
            <person name="Kuspa A."/>
        </authorList>
    </citation>
    <scope>NUCLEOTIDE SEQUENCE [LARGE SCALE GENOMIC DNA]</scope>
    <source>
        <strain>AX4</strain>
    </source>
</reference>
<gene>
    <name type="primary">tnpo</name>
    <name type="ORF">DDB_G0269948</name>
</gene>
<accession>Q55CQ7</accession>
<protein>
    <recommendedName>
        <fullName>Transportin</fullName>
    </recommendedName>
    <alternativeName>
        <fullName>Importin subunit beta</fullName>
    </alternativeName>
    <alternativeName>
        <fullName>Karyopherin subunit beta</fullName>
    </alternativeName>
</protein>